<evidence type="ECO:0000255" key="1">
    <source>
        <dbReference type="HAMAP-Rule" id="MF_01124"/>
    </source>
</evidence>
<reference key="1">
    <citation type="journal article" date="2010" name="Genome Biol.">
        <title>Structure and dynamics of the pan-genome of Streptococcus pneumoniae and closely related species.</title>
        <authorList>
            <person name="Donati C."/>
            <person name="Hiller N.L."/>
            <person name="Tettelin H."/>
            <person name="Muzzi A."/>
            <person name="Croucher N.J."/>
            <person name="Angiuoli S.V."/>
            <person name="Oggioni M."/>
            <person name="Dunning Hotopp J.C."/>
            <person name="Hu F.Z."/>
            <person name="Riley D.R."/>
            <person name="Covacci A."/>
            <person name="Mitchell T.J."/>
            <person name="Bentley S.D."/>
            <person name="Kilian M."/>
            <person name="Ehrlich G.D."/>
            <person name="Rappuoli R."/>
            <person name="Moxon E.R."/>
            <person name="Masignani V."/>
        </authorList>
    </citation>
    <scope>NUCLEOTIDE SEQUENCE [LARGE SCALE GENOMIC DNA]</scope>
    <source>
        <strain>P1031</strain>
    </source>
</reference>
<feature type="chain" id="PRO_1000164059" description="Adapter protein MecA">
    <location>
        <begin position="1"/>
        <end position="245"/>
    </location>
</feature>
<sequence>MKMKQISDTTLKITMSLEDLMDRGMEIADFLVPQEKTEEFFYAILDELEMPDSFLDTGMLSFRVTPKPDKVDVFVTKSKIDQNLDFEDLSDLPDMEELAQMSPDEFIKTLEKSIADKTKDDIEAIQSLEQVEAKEEEQEQAEQEAESKKEPYIYYILSFAKLADLVAFAKTVTFEMETSELYKMNERYYLTILVDIENHPSPYPAWLLARMREFADDSDISRSVLQEYGQVLMSHDAVLNLQKIG</sequence>
<gene>
    <name evidence="1" type="primary">mecA</name>
    <name type="ordered locus">SPP_1382</name>
</gene>
<organism>
    <name type="scientific">Streptococcus pneumoniae (strain P1031)</name>
    <dbReference type="NCBI Taxonomy" id="488223"/>
    <lineage>
        <taxon>Bacteria</taxon>
        <taxon>Bacillati</taxon>
        <taxon>Bacillota</taxon>
        <taxon>Bacilli</taxon>
        <taxon>Lactobacillales</taxon>
        <taxon>Streptococcaceae</taxon>
        <taxon>Streptococcus</taxon>
    </lineage>
</organism>
<accession>C1CL71</accession>
<name>MECA_STRZP</name>
<proteinExistence type="inferred from homology"/>
<comment type="function">
    <text evidence="1">Enables the recognition and targeting of unfolded and aggregated proteins to the ClpC protease or to other proteins involved in proteolysis.</text>
</comment>
<comment type="subunit">
    <text evidence="1">Homodimer.</text>
</comment>
<comment type="domain">
    <text>The N-terminal domain probably binds unfolded/aggregated proteins; the C-terminal domain interacts with ClpC.</text>
</comment>
<comment type="similarity">
    <text evidence="1">Belongs to the MecA family.</text>
</comment>
<protein>
    <recommendedName>
        <fullName evidence="1">Adapter protein MecA</fullName>
    </recommendedName>
</protein>
<dbReference type="EMBL" id="CP000920">
    <property type="protein sequence ID" value="ACO21309.1"/>
    <property type="molecule type" value="Genomic_DNA"/>
</dbReference>
<dbReference type="RefSeq" id="WP_000782676.1">
    <property type="nucleotide sequence ID" value="NC_012467.1"/>
</dbReference>
<dbReference type="SMR" id="C1CL71"/>
<dbReference type="GeneID" id="45653378"/>
<dbReference type="KEGG" id="spp:SPP_1382"/>
<dbReference type="HOGENOM" id="CLU_071496_1_0_9"/>
<dbReference type="GO" id="GO:0030674">
    <property type="term" value="F:protein-macromolecule adaptor activity"/>
    <property type="evidence" value="ECO:0007669"/>
    <property type="project" value="UniProtKB-UniRule"/>
</dbReference>
<dbReference type="Gene3D" id="3.30.70.1950">
    <property type="match status" value="1"/>
</dbReference>
<dbReference type="HAMAP" id="MF_01124">
    <property type="entry name" value="MecA"/>
    <property type="match status" value="1"/>
</dbReference>
<dbReference type="InterPro" id="IPR038471">
    <property type="entry name" value="MecA_C_sf"/>
</dbReference>
<dbReference type="InterPro" id="IPR008681">
    <property type="entry name" value="Neg-reg_MecA"/>
</dbReference>
<dbReference type="NCBIfam" id="NF002643">
    <property type="entry name" value="PRK02315.1-4"/>
    <property type="match status" value="1"/>
</dbReference>
<dbReference type="PANTHER" id="PTHR39161">
    <property type="entry name" value="ADAPTER PROTEIN MECA"/>
    <property type="match status" value="1"/>
</dbReference>
<dbReference type="PANTHER" id="PTHR39161:SF1">
    <property type="entry name" value="ADAPTER PROTEIN MECA 1"/>
    <property type="match status" value="1"/>
</dbReference>
<dbReference type="Pfam" id="PF05389">
    <property type="entry name" value="MecA"/>
    <property type="match status" value="1"/>
</dbReference>
<dbReference type="PIRSF" id="PIRSF029008">
    <property type="entry name" value="MecA"/>
    <property type="match status" value="1"/>
</dbReference>